<proteinExistence type="evidence at transcript level"/>
<dbReference type="EMBL" id="AC149037">
    <property type="protein sequence ID" value="AAT73696.1"/>
    <property type="molecule type" value="Genomic_DNA"/>
</dbReference>
<dbReference type="EMBL" id="BC081361">
    <property type="protein sequence ID" value="AAH81361.1"/>
    <property type="molecule type" value="mRNA"/>
</dbReference>
<dbReference type="RefSeq" id="NP_001008148.1">
    <property type="nucleotide sequence ID" value="NM_001008147.1"/>
</dbReference>
<dbReference type="SMR" id="Q6F2E4"/>
<dbReference type="FunCoup" id="Q6F2E4">
    <property type="interactions" value="751"/>
</dbReference>
<dbReference type="STRING" id="8364.ENSXETP00000040825"/>
<dbReference type="PaxDb" id="8364-ENSXETP00000036667"/>
<dbReference type="DNASU" id="493510"/>
<dbReference type="GeneID" id="493510"/>
<dbReference type="KEGG" id="xtr:493510"/>
<dbReference type="AGR" id="Xenbase:XB-GENE-488077"/>
<dbReference type="CTD" id="2297"/>
<dbReference type="Xenbase" id="XB-GENE-488077">
    <property type="gene designation" value="foxd1"/>
</dbReference>
<dbReference type="eggNOG" id="KOG2294">
    <property type="taxonomic scope" value="Eukaryota"/>
</dbReference>
<dbReference type="HOGENOM" id="CLU_040357_5_0_1"/>
<dbReference type="InParanoid" id="Q6F2E4"/>
<dbReference type="OMA" id="AHSHCAS"/>
<dbReference type="OrthoDB" id="5402974at2759"/>
<dbReference type="PhylomeDB" id="Q6F2E4"/>
<dbReference type="TreeFam" id="TF316127"/>
<dbReference type="Proteomes" id="UP000008143">
    <property type="component" value="Chromosome 1"/>
</dbReference>
<dbReference type="Bgee" id="ENSXETG00000035456">
    <property type="expression patterns" value="Expressed in neurula embryo and 5 other cell types or tissues"/>
</dbReference>
<dbReference type="GO" id="GO:0005634">
    <property type="term" value="C:nucleus"/>
    <property type="evidence" value="ECO:0000250"/>
    <property type="project" value="UniProtKB"/>
</dbReference>
<dbReference type="GO" id="GO:0003700">
    <property type="term" value="F:DNA-binding transcription factor activity"/>
    <property type="evidence" value="ECO:0007669"/>
    <property type="project" value="InterPro"/>
</dbReference>
<dbReference type="GO" id="GO:0043565">
    <property type="term" value="F:sequence-specific DNA binding"/>
    <property type="evidence" value="ECO:0007669"/>
    <property type="project" value="InterPro"/>
</dbReference>
<dbReference type="GO" id="GO:0007398">
    <property type="term" value="P:ectoderm development"/>
    <property type="evidence" value="ECO:0000250"/>
    <property type="project" value="UniProtKB"/>
</dbReference>
<dbReference type="GO" id="GO:0030900">
    <property type="term" value="P:forebrain development"/>
    <property type="evidence" value="ECO:0000250"/>
    <property type="project" value="UniProtKB"/>
</dbReference>
<dbReference type="GO" id="GO:0007498">
    <property type="term" value="P:mesoderm development"/>
    <property type="evidence" value="ECO:0000250"/>
    <property type="project" value="UniProtKB"/>
</dbReference>
<dbReference type="GO" id="GO:0030336">
    <property type="term" value="P:negative regulation of cell migration"/>
    <property type="evidence" value="ECO:0000250"/>
    <property type="project" value="UniProtKB"/>
</dbReference>
<dbReference type="GO" id="GO:0045892">
    <property type="term" value="P:negative regulation of DNA-templated transcription"/>
    <property type="evidence" value="ECO:0000250"/>
    <property type="project" value="UniProtKB"/>
</dbReference>
<dbReference type="GO" id="GO:0000122">
    <property type="term" value="P:negative regulation of transcription by RNA polymerase II"/>
    <property type="evidence" value="ECO:0000250"/>
    <property type="project" value="UniProtKB"/>
</dbReference>
<dbReference type="GO" id="GO:0007399">
    <property type="term" value="P:nervous system development"/>
    <property type="evidence" value="ECO:0000250"/>
    <property type="project" value="UniProtKB"/>
</dbReference>
<dbReference type="GO" id="GO:0001755">
    <property type="term" value="P:neural crest cell migration"/>
    <property type="evidence" value="ECO:0000250"/>
    <property type="project" value="UniProtKB"/>
</dbReference>
<dbReference type="CDD" id="cd20046">
    <property type="entry name" value="FH_FOXD1_D2-like"/>
    <property type="match status" value="1"/>
</dbReference>
<dbReference type="FunFam" id="1.10.10.10:FF:000016">
    <property type="entry name" value="Forkhead box protein I1"/>
    <property type="match status" value="1"/>
</dbReference>
<dbReference type="Gene3D" id="1.10.10.10">
    <property type="entry name" value="Winged helix-like DNA-binding domain superfamily/Winged helix DNA-binding domain"/>
    <property type="match status" value="1"/>
</dbReference>
<dbReference type="InterPro" id="IPR001766">
    <property type="entry name" value="Fork_head_dom"/>
</dbReference>
<dbReference type="InterPro" id="IPR050211">
    <property type="entry name" value="FOX_domain-containing"/>
</dbReference>
<dbReference type="InterPro" id="IPR018122">
    <property type="entry name" value="TF_fork_head_CS_1"/>
</dbReference>
<dbReference type="InterPro" id="IPR030456">
    <property type="entry name" value="TF_fork_head_CS_2"/>
</dbReference>
<dbReference type="InterPro" id="IPR036388">
    <property type="entry name" value="WH-like_DNA-bd_sf"/>
</dbReference>
<dbReference type="InterPro" id="IPR036390">
    <property type="entry name" value="WH_DNA-bd_sf"/>
</dbReference>
<dbReference type="PANTHER" id="PTHR11829">
    <property type="entry name" value="FORKHEAD BOX PROTEIN"/>
    <property type="match status" value="1"/>
</dbReference>
<dbReference type="PANTHER" id="PTHR11829:SF407">
    <property type="entry name" value="FORKHEAD BOX PROTEIN D1"/>
    <property type="match status" value="1"/>
</dbReference>
<dbReference type="Pfam" id="PF00250">
    <property type="entry name" value="Forkhead"/>
    <property type="match status" value="1"/>
</dbReference>
<dbReference type="PRINTS" id="PR00053">
    <property type="entry name" value="FORKHEAD"/>
</dbReference>
<dbReference type="SMART" id="SM00339">
    <property type="entry name" value="FH"/>
    <property type="match status" value="1"/>
</dbReference>
<dbReference type="SUPFAM" id="SSF46785">
    <property type="entry name" value="Winged helix' DNA-binding domain"/>
    <property type="match status" value="1"/>
</dbReference>
<dbReference type="PROSITE" id="PS00657">
    <property type="entry name" value="FORK_HEAD_1"/>
    <property type="match status" value="1"/>
</dbReference>
<dbReference type="PROSITE" id="PS00658">
    <property type="entry name" value="FORK_HEAD_2"/>
    <property type="match status" value="1"/>
</dbReference>
<dbReference type="PROSITE" id="PS50039">
    <property type="entry name" value="FORK_HEAD_3"/>
    <property type="match status" value="1"/>
</dbReference>
<comment type="function">
    <text evidence="1">Transcriptional repressor that down-regulates bmp4 signaling in both mesoderm and ectoderm. Regulates mesoderm patterning by repressing ventral mesoderm genes and promoting the expression of dorsolateral genes. Can also neuralize ectodermal cells directly. Inhibits neural crest migration. The transcription factors foxd1 and foxg1 mutually repress each other to pattern the forebrain (By similarity).</text>
</comment>
<comment type="subcellular location">
    <subcellularLocation>
        <location evidence="2 5">Nucleus</location>
    </subcellularLocation>
</comment>
<evidence type="ECO:0000250" key="1"/>
<evidence type="ECO:0000255" key="2"/>
<evidence type="ECO:0000255" key="3">
    <source>
        <dbReference type="PROSITE-ProRule" id="PRU00089"/>
    </source>
</evidence>
<evidence type="ECO:0000256" key="4">
    <source>
        <dbReference type="SAM" id="MobiDB-lite"/>
    </source>
</evidence>
<evidence type="ECO:0000305" key="5"/>
<evidence type="ECO:0000312" key="6">
    <source>
        <dbReference type="EMBL" id="AAH81361.1"/>
    </source>
</evidence>
<evidence type="ECO:0000312" key="7">
    <source>
        <dbReference type="EMBL" id="AAT73696.1"/>
    </source>
</evidence>
<keyword id="KW-0217">Developmental protein</keyword>
<keyword id="KW-0221">Differentiation</keyword>
<keyword id="KW-0238">DNA-binding</keyword>
<keyword id="KW-0524">Neurogenesis</keyword>
<keyword id="KW-0539">Nucleus</keyword>
<keyword id="KW-1185">Reference proteome</keyword>
<keyword id="KW-0678">Repressor</keyword>
<keyword id="KW-0804">Transcription</keyword>
<keyword id="KW-0805">Transcription regulation</keyword>
<reference evidence="7" key="1">
    <citation type="submission" date="2004-07" db="EMBL/GenBank/DDBJ databases">
        <title>Sequence of Xenopus tropicalis development genes.</title>
        <authorList>
            <person name="Qin S."/>
            <person name="Dors M."/>
            <person name="Johnson E."/>
            <person name="Bloom S."/>
            <person name="Hood L."/>
            <person name="Rowen L."/>
        </authorList>
    </citation>
    <scope>NUCLEOTIDE SEQUENCE [GENOMIC DNA]</scope>
</reference>
<reference evidence="7" key="2">
    <citation type="submission" date="2004-08" db="EMBL/GenBank/DDBJ databases">
        <authorList>
            <consortium name="NIH - Xenopus Gene Collection (XGC) project"/>
        </authorList>
    </citation>
    <scope>NUCLEOTIDE SEQUENCE [LARGE SCALE MRNA]</scope>
    <source>
        <tissue evidence="6">Embryo</tissue>
    </source>
</reference>
<sequence>MTLSSDMSDVLAEETDIDVVGEDDEPRAEEEEDEDLHGDLLPTSPQSSATKDPYKGTGGGGGRSALVKPPYSYIALITMAILQSPKKRLTLSEICEFISNRFPYYREKFPAWQNSIRHNLSLNDCFVKIPREPGNPGKGNYWTLDPESADMFDNGSFLRRRKRFKRQQAPELVLREPGHFLPASAYSYGPYSCAYGIQLQPFHPHSALIAFQQQQQQARQQPPSLPPMAAPALMPPAAQDLSRTCTFYPHQLSPAALPPSLQSKSSSALARSTFSIESIIGGDLNPGQCNSPKAAGVPVISRALVTFSSSQAAAALGGTLQPGTVLTNH</sequence>
<feature type="chain" id="PRO_0000253930" description="Forkhead box protein D1">
    <location>
        <begin position="1"/>
        <end position="329"/>
    </location>
</feature>
<feature type="DNA-binding region" description="Fork-head" evidence="3">
    <location>
        <begin position="68"/>
        <end position="162"/>
    </location>
</feature>
<feature type="region of interest" description="Disordered" evidence="4">
    <location>
        <begin position="1"/>
        <end position="63"/>
    </location>
</feature>
<feature type="compositionally biased region" description="Acidic residues" evidence="4">
    <location>
        <begin position="11"/>
        <end position="36"/>
    </location>
</feature>
<protein>
    <recommendedName>
        <fullName>Forkhead box protein D1</fullName>
        <shortName>FoxD1</shortName>
    </recommendedName>
    <alternativeName>
        <fullName>Brain factor 2</fullName>
        <shortName>BF-2</shortName>
    </alternativeName>
</protein>
<gene>
    <name evidence="6" type="primary">foxd1</name>
</gene>
<name>FOXD1_XENTR</name>
<accession>Q6F2E4</accession>
<organism>
    <name type="scientific">Xenopus tropicalis</name>
    <name type="common">Western clawed frog</name>
    <name type="synonym">Silurana tropicalis</name>
    <dbReference type="NCBI Taxonomy" id="8364"/>
    <lineage>
        <taxon>Eukaryota</taxon>
        <taxon>Metazoa</taxon>
        <taxon>Chordata</taxon>
        <taxon>Craniata</taxon>
        <taxon>Vertebrata</taxon>
        <taxon>Euteleostomi</taxon>
        <taxon>Amphibia</taxon>
        <taxon>Batrachia</taxon>
        <taxon>Anura</taxon>
        <taxon>Pipoidea</taxon>
        <taxon>Pipidae</taxon>
        <taxon>Xenopodinae</taxon>
        <taxon>Xenopus</taxon>
        <taxon>Silurana</taxon>
    </lineage>
</organism>